<organism>
    <name type="scientific">Methanocaldococcus jannaschii (strain ATCC 43067 / DSM 2661 / JAL-1 / JCM 10045 / NBRC 100440)</name>
    <name type="common">Methanococcus jannaschii</name>
    <dbReference type="NCBI Taxonomy" id="243232"/>
    <lineage>
        <taxon>Archaea</taxon>
        <taxon>Methanobacteriati</taxon>
        <taxon>Methanobacteriota</taxon>
        <taxon>Methanomada group</taxon>
        <taxon>Methanococci</taxon>
        <taxon>Methanococcales</taxon>
        <taxon>Methanocaldococcaceae</taxon>
        <taxon>Methanocaldococcus</taxon>
    </lineage>
</organism>
<gene>
    <name evidence="1" type="primary">rps19e</name>
    <name type="ordered locus">MJ0692</name>
</gene>
<protein>
    <recommendedName>
        <fullName evidence="1">Small ribosomal subunit protein eS19</fullName>
    </recommendedName>
    <alternativeName>
        <fullName evidence="2">30S ribosomal protein S19e</fullName>
    </alternativeName>
</protein>
<comment type="function">
    <text evidence="1">May be involved in maturation of the 30S ribosomal subunit.</text>
</comment>
<comment type="subunit">
    <text evidence="1">Part of the 30S ribosomal subunit.</text>
</comment>
<comment type="similarity">
    <text evidence="1">Belongs to the eukaryotic ribosomal protein eS19 family.</text>
</comment>
<feature type="chain" id="PRO_0000153840" description="Small ribosomal subunit protein eS19">
    <location>
        <begin position="1"/>
        <end position="148"/>
    </location>
</feature>
<reference key="1">
    <citation type="journal article" date="1996" name="Science">
        <title>Complete genome sequence of the methanogenic archaeon, Methanococcus jannaschii.</title>
        <authorList>
            <person name="Bult C.J."/>
            <person name="White O."/>
            <person name="Olsen G.J."/>
            <person name="Zhou L."/>
            <person name="Fleischmann R.D."/>
            <person name="Sutton G.G."/>
            <person name="Blake J.A."/>
            <person name="FitzGerald L.M."/>
            <person name="Clayton R.A."/>
            <person name="Gocayne J.D."/>
            <person name="Kerlavage A.R."/>
            <person name="Dougherty B.A."/>
            <person name="Tomb J.-F."/>
            <person name="Adams M.D."/>
            <person name="Reich C.I."/>
            <person name="Overbeek R."/>
            <person name="Kirkness E.F."/>
            <person name="Weinstock K.G."/>
            <person name="Merrick J.M."/>
            <person name="Glodek A."/>
            <person name="Scott J.L."/>
            <person name="Geoghagen N.S.M."/>
            <person name="Weidman J.F."/>
            <person name="Fuhrmann J.L."/>
            <person name="Nguyen D."/>
            <person name="Utterback T.R."/>
            <person name="Kelley J.M."/>
            <person name="Peterson J.D."/>
            <person name="Sadow P.W."/>
            <person name="Hanna M.C."/>
            <person name="Cotton M.D."/>
            <person name="Roberts K.M."/>
            <person name="Hurst M.A."/>
            <person name="Kaine B.P."/>
            <person name="Borodovsky M."/>
            <person name="Klenk H.-P."/>
            <person name="Fraser C.M."/>
            <person name="Smith H.O."/>
            <person name="Woese C.R."/>
            <person name="Venter J.C."/>
        </authorList>
    </citation>
    <scope>NUCLEOTIDE SEQUENCE [LARGE SCALE GENOMIC DNA]</scope>
    <source>
        <strain>ATCC 43067 / DSM 2661 / JAL-1 / JCM 10045 / NBRC 100440</strain>
    </source>
</reference>
<dbReference type="EMBL" id="L77117">
    <property type="protein sequence ID" value="AAB98687.1"/>
    <property type="molecule type" value="Genomic_DNA"/>
</dbReference>
<dbReference type="PIR" id="D64386">
    <property type="entry name" value="D64386"/>
</dbReference>
<dbReference type="RefSeq" id="WP_010870197.1">
    <property type="nucleotide sequence ID" value="NC_000909.1"/>
</dbReference>
<dbReference type="SMR" id="P54057"/>
<dbReference type="FunCoup" id="P54057">
    <property type="interactions" value="178"/>
</dbReference>
<dbReference type="STRING" id="243232.MJ_0692"/>
<dbReference type="PaxDb" id="243232-MJ_0692"/>
<dbReference type="EnsemblBacteria" id="AAB98687">
    <property type="protein sequence ID" value="AAB98687"/>
    <property type="gene ID" value="MJ_0692"/>
</dbReference>
<dbReference type="GeneID" id="1451558"/>
<dbReference type="KEGG" id="mja:MJ_0692"/>
<dbReference type="eggNOG" id="arCOG01344">
    <property type="taxonomic scope" value="Archaea"/>
</dbReference>
<dbReference type="HOGENOM" id="CLU_108559_1_0_2"/>
<dbReference type="InParanoid" id="P54057"/>
<dbReference type="OrthoDB" id="371836at2157"/>
<dbReference type="PhylomeDB" id="P54057"/>
<dbReference type="Proteomes" id="UP000000805">
    <property type="component" value="Chromosome"/>
</dbReference>
<dbReference type="GO" id="GO:0022627">
    <property type="term" value="C:cytosolic small ribosomal subunit"/>
    <property type="evidence" value="ECO:0000318"/>
    <property type="project" value="GO_Central"/>
</dbReference>
<dbReference type="GO" id="GO:0003723">
    <property type="term" value="F:RNA binding"/>
    <property type="evidence" value="ECO:0000318"/>
    <property type="project" value="GO_Central"/>
</dbReference>
<dbReference type="GO" id="GO:0003735">
    <property type="term" value="F:structural constituent of ribosome"/>
    <property type="evidence" value="ECO:0000318"/>
    <property type="project" value="GO_Central"/>
</dbReference>
<dbReference type="GO" id="GO:0000028">
    <property type="term" value="P:ribosomal small subunit assembly"/>
    <property type="evidence" value="ECO:0000318"/>
    <property type="project" value="GO_Central"/>
</dbReference>
<dbReference type="GO" id="GO:0006412">
    <property type="term" value="P:translation"/>
    <property type="evidence" value="ECO:0007669"/>
    <property type="project" value="UniProtKB-UniRule"/>
</dbReference>
<dbReference type="FunFam" id="1.10.10.10:FF:000449">
    <property type="entry name" value="30S ribosomal protein S19e"/>
    <property type="match status" value="1"/>
</dbReference>
<dbReference type="Gene3D" id="1.10.10.10">
    <property type="entry name" value="Winged helix-like DNA-binding domain superfamily/Winged helix DNA-binding domain"/>
    <property type="match status" value="1"/>
</dbReference>
<dbReference type="HAMAP" id="MF_01474">
    <property type="entry name" value="Ribosomal_eS19"/>
    <property type="match status" value="1"/>
</dbReference>
<dbReference type="InterPro" id="IPR001266">
    <property type="entry name" value="Ribosomal_eS19"/>
</dbReference>
<dbReference type="InterPro" id="IPR027548">
    <property type="entry name" value="Ribosomal_eS19_archaeal"/>
</dbReference>
<dbReference type="InterPro" id="IPR018277">
    <property type="entry name" value="Ribosomal_eS19_CS"/>
</dbReference>
<dbReference type="InterPro" id="IPR036388">
    <property type="entry name" value="WH-like_DNA-bd_sf"/>
</dbReference>
<dbReference type="InterPro" id="IPR036390">
    <property type="entry name" value="WH_DNA-bd_sf"/>
</dbReference>
<dbReference type="NCBIfam" id="NF006811">
    <property type="entry name" value="PRK09333.1"/>
    <property type="match status" value="1"/>
</dbReference>
<dbReference type="PANTHER" id="PTHR11710">
    <property type="entry name" value="40S RIBOSOMAL PROTEIN S19"/>
    <property type="match status" value="1"/>
</dbReference>
<dbReference type="PANTHER" id="PTHR11710:SF0">
    <property type="entry name" value="40S RIBOSOMAL PROTEIN S19"/>
    <property type="match status" value="1"/>
</dbReference>
<dbReference type="Pfam" id="PF01090">
    <property type="entry name" value="Ribosomal_S19e"/>
    <property type="match status" value="1"/>
</dbReference>
<dbReference type="SMART" id="SM01413">
    <property type="entry name" value="Ribosomal_S19e"/>
    <property type="match status" value="1"/>
</dbReference>
<dbReference type="SUPFAM" id="SSF46785">
    <property type="entry name" value="Winged helix' DNA-binding domain"/>
    <property type="match status" value="1"/>
</dbReference>
<dbReference type="PROSITE" id="PS00628">
    <property type="entry name" value="RIBOSOMAL_S19E"/>
    <property type="match status" value="1"/>
</dbReference>
<name>RS19E_METJA</name>
<proteinExistence type="inferred from homology"/>
<keyword id="KW-1185">Reference proteome</keyword>
<keyword id="KW-0687">Ribonucleoprotein</keyword>
<keyword id="KW-0689">Ribosomal protein</keyword>
<sequence length="148" mass="17030">MVTVYDVPADKLIQKTAEKLKEMNIGVPEWVDFVKTGVSRERRPDQDDWWYIRCASILRKIYIYGPVGVSRLRTAYGGRKNRGHEPEHFYKGSGNIIRKALQELEKLGLVEKTPEGRVVTPKGRSFLDNIAKEVRDEIINEIPALAKY</sequence>
<accession>P54057</accession>
<evidence type="ECO:0000255" key="1">
    <source>
        <dbReference type="HAMAP-Rule" id="MF_01474"/>
    </source>
</evidence>
<evidence type="ECO:0000305" key="2"/>